<reference key="1">
    <citation type="journal article" date="2003" name="Proc. Natl. Acad. Sci. U.S.A.">
        <title>The complete genome sequence of Mycobacterium bovis.</title>
        <authorList>
            <person name="Garnier T."/>
            <person name="Eiglmeier K."/>
            <person name="Camus J.-C."/>
            <person name="Medina N."/>
            <person name="Mansoor H."/>
            <person name="Pryor M."/>
            <person name="Duthoy S."/>
            <person name="Grondin S."/>
            <person name="Lacroix C."/>
            <person name="Monsempe C."/>
            <person name="Simon S."/>
            <person name="Harris B."/>
            <person name="Atkin R."/>
            <person name="Doggett J."/>
            <person name="Mayes R."/>
            <person name="Keating L."/>
            <person name="Wheeler P.R."/>
            <person name="Parkhill J."/>
            <person name="Barrell B.G."/>
            <person name="Cole S.T."/>
            <person name="Gordon S.V."/>
            <person name="Hewinson R.G."/>
        </authorList>
    </citation>
    <scope>NUCLEOTIDE SEQUENCE [LARGE SCALE GENOMIC DNA]</scope>
    <source>
        <strain>ATCC BAA-935 / AF2122/97</strain>
    </source>
</reference>
<reference key="2">
    <citation type="journal article" date="2017" name="Genome Announc.">
        <title>Updated reference genome sequence and annotation of Mycobacterium bovis AF2122/97.</title>
        <authorList>
            <person name="Malone K.M."/>
            <person name="Farrell D."/>
            <person name="Stuber T.P."/>
            <person name="Schubert O.T."/>
            <person name="Aebersold R."/>
            <person name="Robbe-Austerman S."/>
            <person name="Gordon S.V."/>
        </authorList>
    </citation>
    <scope>NUCLEOTIDE SEQUENCE [LARGE SCALE GENOMIC DNA]</scope>
    <scope>GENOME REANNOTATION</scope>
    <source>
        <strain>ATCC BAA-935 / AF2122/97</strain>
    </source>
</reference>
<comment type="subcellular location">
    <subcellularLocation>
        <location evidence="1">Secreted</location>
    </subcellularLocation>
    <text evidence="1">Secreted via the ESX-5 / type VII secretion system (T7SS).</text>
</comment>
<comment type="similarity">
    <text evidence="2">Belongs to the WXG100 family. CFP-10 subfamily.</text>
</comment>
<organism>
    <name type="scientific">Mycobacterium bovis (strain ATCC BAA-935 / AF2122/97)</name>
    <dbReference type="NCBI Taxonomy" id="233413"/>
    <lineage>
        <taxon>Bacteria</taxon>
        <taxon>Bacillati</taxon>
        <taxon>Actinomycetota</taxon>
        <taxon>Actinomycetes</taxon>
        <taxon>Mycobacteriales</taxon>
        <taxon>Mycobacteriaceae</taxon>
        <taxon>Mycobacterium</taxon>
        <taxon>Mycobacterium tuberculosis complex</taxon>
    </lineage>
</organism>
<protein>
    <recommendedName>
        <fullName evidence="2">ESAT-6-like protein EsxM</fullName>
    </recommendedName>
</protein>
<name>ESXM_MYCBO</name>
<gene>
    <name type="primary">esxM</name>
    <name type="ordered locus">BQ2027_MB1820</name>
</gene>
<dbReference type="EMBL" id="LT708304">
    <property type="protein sequence ID" value="SIU00424.1"/>
    <property type="molecule type" value="Genomic_DNA"/>
</dbReference>
<dbReference type="RefSeq" id="NP_855473.1">
    <property type="nucleotide sequence ID" value="NC_002945.3"/>
</dbReference>
<dbReference type="SMR" id="P59805"/>
<dbReference type="KEGG" id="mbo:BQ2027_MB1820"/>
<dbReference type="PATRIC" id="fig|233413.5.peg.2000"/>
<dbReference type="Proteomes" id="UP000001419">
    <property type="component" value="Chromosome"/>
</dbReference>
<dbReference type="GO" id="GO:0005576">
    <property type="term" value="C:extracellular region"/>
    <property type="evidence" value="ECO:0007669"/>
    <property type="project" value="UniProtKB-SubCell"/>
</dbReference>
<dbReference type="FunFam" id="1.10.287.1060:FF:000006">
    <property type="entry name" value="ESAT-6-like protein"/>
    <property type="match status" value="1"/>
</dbReference>
<dbReference type="Gene3D" id="1.10.287.1060">
    <property type="entry name" value="ESAT-6-like"/>
    <property type="match status" value="1"/>
</dbReference>
<dbReference type="InterPro" id="IPR036689">
    <property type="entry name" value="ESAT-6-like_sf"/>
</dbReference>
<dbReference type="InterPro" id="IPR010310">
    <property type="entry name" value="T7SS_ESAT-6-like"/>
</dbReference>
<dbReference type="NCBIfam" id="TIGR03930">
    <property type="entry name" value="WXG100_ESAT6"/>
    <property type="match status" value="1"/>
</dbReference>
<dbReference type="Pfam" id="PF06013">
    <property type="entry name" value="WXG100"/>
    <property type="match status" value="1"/>
</dbReference>
<dbReference type="SUPFAM" id="SSF140453">
    <property type="entry name" value="EsxAB dimer-like"/>
    <property type="match status" value="1"/>
</dbReference>
<keyword id="KW-1185">Reference proteome</keyword>
<keyword id="KW-0964">Secreted</keyword>
<sequence length="98" mass="10990">MASRFMTDPHAMRDMAGRFEVHAQTVEDEARRMWASAQNISGAGWSGQAEATSLDTMTQMNQAFRNIVNMLHGVRDGLVRDANNYEQQEQASQQILSS</sequence>
<feature type="chain" id="PRO_0000167806" description="ESAT-6-like protein EsxM">
    <location>
        <begin position="1"/>
        <end position="98"/>
    </location>
</feature>
<evidence type="ECO:0000250" key="1">
    <source>
        <dbReference type="UniProtKB" id="B2HSU3"/>
    </source>
</evidence>
<evidence type="ECO:0000305" key="2"/>
<proteinExistence type="inferred from homology"/>
<accession>P59805</accession>
<accession>A0A1R3Y057</accession>
<accession>X2BIW1</accession>